<name>RS4_PSE14</name>
<organism>
    <name type="scientific">Pseudomonas savastanoi pv. phaseolicola (strain 1448A / Race 6)</name>
    <name type="common">Pseudomonas syringae pv. phaseolicola (strain 1448A / Race 6)</name>
    <dbReference type="NCBI Taxonomy" id="264730"/>
    <lineage>
        <taxon>Bacteria</taxon>
        <taxon>Pseudomonadati</taxon>
        <taxon>Pseudomonadota</taxon>
        <taxon>Gammaproteobacteria</taxon>
        <taxon>Pseudomonadales</taxon>
        <taxon>Pseudomonadaceae</taxon>
        <taxon>Pseudomonas</taxon>
    </lineage>
</organism>
<evidence type="ECO:0000255" key="1">
    <source>
        <dbReference type="HAMAP-Rule" id="MF_01306"/>
    </source>
</evidence>
<evidence type="ECO:0000305" key="2"/>
<sequence>MARYIGPKCKLARREGTDLFLKSGVRAIESKCNIEAAPGIHGQRRGRQSDYGTQLREKQKVRRIYGVLERQFSGYYKEAAGKKGATGENLLQLLECRLDNVVYRMGFGSTRAESRQLVSHKSVSVNGKTVNVPSYQVRAGDVVAIREKAKNQLRIVQALDLCAQRGRVEWVEVDTEKKSGVFKNVPARSDLSADINESLIVELYSK</sequence>
<proteinExistence type="inferred from homology"/>
<dbReference type="EMBL" id="CP000058">
    <property type="protein sequence ID" value="AAZ34638.1"/>
    <property type="molecule type" value="Genomic_DNA"/>
</dbReference>
<dbReference type="RefSeq" id="WP_002555465.1">
    <property type="nucleotide sequence ID" value="NC_005773.3"/>
</dbReference>
<dbReference type="SMR" id="Q48D60"/>
<dbReference type="GeneID" id="96221006"/>
<dbReference type="KEGG" id="psp:PSPPH_4568"/>
<dbReference type="eggNOG" id="COG0522">
    <property type="taxonomic scope" value="Bacteria"/>
</dbReference>
<dbReference type="HOGENOM" id="CLU_092403_0_2_6"/>
<dbReference type="Proteomes" id="UP000000551">
    <property type="component" value="Chromosome"/>
</dbReference>
<dbReference type="GO" id="GO:0015935">
    <property type="term" value="C:small ribosomal subunit"/>
    <property type="evidence" value="ECO:0007669"/>
    <property type="project" value="InterPro"/>
</dbReference>
<dbReference type="GO" id="GO:0019843">
    <property type="term" value="F:rRNA binding"/>
    <property type="evidence" value="ECO:0007669"/>
    <property type="project" value="UniProtKB-UniRule"/>
</dbReference>
<dbReference type="GO" id="GO:0003735">
    <property type="term" value="F:structural constituent of ribosome"/>
    <property type="evidence" value="ECO:0007669"/>
    <property type="project" value="InterPro"/>
</dbReference>
<dbReference type="GO" id="GO:0042274">
    <property type="term" value="P:ribosomal small subunit biogenesis"/>
    <property type="evidence" value="ECO:0007669"/>
    <property type="project" value="TreeGrafter"/>
</dbReference>
<dbReference type="GO" id="GO:0006412">
    <property type="term" value="P:translation"/>
    <property type="evidence" value="ECO:0007669"/>
    <property type="project" value="UniProtKB-UniRule"/>
</dbReference>
<dbReference type="CDD" id="cd00165">
    <property type="entry name" value="S4"/>
    <property type="match status" value="1"/>
</dbReference>
<dbReference type="FunFam" id="1.10.1050.10:FF:000001">
    <property type="entry name" value="30S ribosomal protein S4"/>
    <property type="match status" value="1"/>
</dbReference>
<dbReference type="FunFam" id="3.10.290.10:FF:000001">
    <property type="entry name" value="30S ribosomal protein S4"/>
    <property type="match status" value="1"/>
</dbReference>
<dbReference type="Gene3D" id="1.10.1050.10">
    <property type="entry name" value="Ribosomal Protein S4 Delta 41, Chain A, domain 1"/>
    <property type="match status" value="1"/>
</dbReference>
<dbReference type="Gene3D" id="3.10.290.10">
    <property type="entry name" value="RNA-binding S4 domain"/>
    <property type="match status" value="1"/>
</dbReference>
<dbReference type="HAMAP" id="MF_01306_B">
    <property type="entry name" value="Ribosomal_uS4_B"/>
    <property type="match status" value="1"/>
</dbReference>
<dbReference type="InterPro" id="IPR022801">
    <property type="entry name" value="Ribosomal_uS4"/>
</dbReference>
<dbReference type="InterPro" id="IPR005709">
    <property type="entry name" value="Ribosomal_uS4_bac-type"/>
</dbReference>
<dbReference type="InterPro" id="IPR018079">
    <property type="entry name" value="Ribosomal_uS4_CS"/>
</dbReference>
<dbReference type="InterPro" id="IPR001912">
    <property type="entry name" value="Ribosomal_uS4_N"/>
</dbReference>
<dbReference type="InterPro" id="IPR002942">
    <property type="entry name" value="S4_RNA-bd"/>
</dbReference>
<dbReference type="InterPro" id="IPR036986">
    <property type="entry name" value="S4_RNA-bd_sf"/>
</dbReference>
<dbReference type="NCBIfam" id="NF003717">
    <property type="entry name" value="PRK05327.1"/>
    <property type="match status" value="1"/>
</dbReference>
<dbReference type="NCBIfam" id="TIGR01017">
    <property type="entry name" value="rpsD_bact"/>
    <property type="match status" value="1"/>
</dbReference>
<dbReference type="PANTHER" id="PTHR11831">
    <property type="entry name" value="30S 40S RIBOSOMAL PROTEIN"/>
    <property type="match status" value="1"/>
</dbReference>
<dbReference type="PANTHER" id="PTHR11831:SF4">
    <property type="entry name" value="SMALL RIBOSOMAL SUBUNIT PROTEIN US4M"/>
    <property type="match status" value="1"/>
</dbReference>
<dbReference type="Pfam" id="PF00163">
    <property type="entry name" value="Ribosomal_S4"/>
    <property type="match status" value="1"/>
</dbReference>
<dbReference type="Pfam" id="PF01479">
    <property type="entry name" value="S4"/>
    <property type="match status" value="1"/>
</dbReference>
<dbReference type="SMART" id="SM01390">
    <property type="entry name" value="Ribosomal_S4"/>
    <property type="match status" value="1"/>
</dbReference>
<dbReference type="SMART" id="SM00363">
    <property type="entry name" value="S4"/>
    <property type="match status" value="1"/>
</dbReference>
<dbReference type="SUPFAM" id="SSF55174">
    <property type="entry name" value="Alpha-L RNA-binding motif"/>
    <property type="match status" value="1"/>
</dbReference>
<dbReference type="PROSITE" id="PS00632">
    <property type="entry name" value="RIBOSOMAL_S4"/>
    <property type="match status" value="1"/>
</dbReference>
<dbReference type="PROSITE" id="PS50889">
    <property type="entry name" value="S4"/>
    <property type="match status" value="1"/>
</dbReference>
<comment type="function">
    <text evidence="1">One of the primary rRNA binding proteins, it binds directly to 16S rRNA where it nucleates assembly of the body of the 30S subunit.</text>
</comment>
<comment type="function">
    <text evidence="1">With S5 and S12 plays an important role in translational accuracy.</text>
</comment>
<comment type="subunit">
    <text evidence="1">Part of the 30S ribosomal subunit. Contacts protein S5. The interaction surface between S4 and S5 is involved in control of translational fidelity.</text>
</comment>
<comment type="similarity">
    <text evidence="1">Belongs to the universal ribosomal protein uS4 family.</text>
</comment>
<accession>Q48D60</accession>
<reference key="1">
    <citation type="journal article" date="2005" name="J. Bacteriol.">
        <title>Whole-genome sequence analysis of Pseudomonas syringae pv. phaseolicola 1448A reveals divergence among pathovars in genes involved in virulence and transposition.</title>
        <authorList>
            <person name="Joardar V."/>
            <person name="Lindeberg M."/>
            <person name="Jackson R.W."/>
            <person name="Selengut J."/>
            <person name="Dodson R."/>
            <person name="Brinkac L.M."/>
            <person name="Daugherty S.C."/>
            <person name="DeBoy R.T."/>
            <person name="Durkin A.S."/>
            <person name="Gwinn Giglio M."/>
            <person name="Madupu R."/>
            <person name="Nelson W.C."/>
            <person name="Rosovitz M.J."/>
            <person name="Sullivan S.A."/>
            <person name="Crabtree J."/>
            <person name="Creasy T."/>
            <person name="Davidsen T.M."/>
            <person name="Haft D.H."/>
            <person name="Zafar N."/>
            <person name="Zhou L."/>
            <person name="Halpin R."/>
            <person name="Holley T."/>
            <person name="Khouri H.M."/>
            <person name="Feldblyum T.V."/>
            <person name="White O."/>
            <person name="Fraser C.M."/>
            <person name="Chatterjee A.K."/>
            <person name="Cartinhour S."/>
            <person name="Schneider D."/>
            <person name="Mansfield J.W."/>
            <person name="Collmer A."/>
            <person name="Buell R."/>
        </authorList>
    </citation>
    <scope>NUCLEOTIDE SEQUENCE [LARGE SCALE GENOMIC DNA]</scope>
    <source>
        <strain>1448A / Race 6</strain>
    </source>
</reference>
<protein>
    <recommendedName>
        <fullName evidence="1">Small ribosomal subunit protein uS4</fullName>
    </recommendedName>
    <alternativeName>
        <fullName evidence="2">30S ribosomal protein S4</fullName>
    </alternativeName>
</protein>
<gene>
    <name evidence="1" type="primary">rpsD</name>
    <name type="ordered locus">PSPPH_4568</name>
</gene>
<keyword id="KW-0687">Ribonucleoprotein</keyword>
<keyword id="KW-0689">Ribosomal protein</keyword>
<keyword id="KW-0694">RNA-binding</keyword>
<keyword id="KW-0699">rRNA-binding</keyword>
<feature type="chain" id="PRO_0000228916" description="Small ribosomal subunit protein uS4">
    <location>
        <begin position="1"/>
        <end position="206"/>
    </location>
</feature>
<feature type="domain" description="S4 RNA-binding" evidence="1">
    <location>
        <begin position="96"/>
        <end position="156"/>
    </location>
</feature>